<accession>Q2YWK0</accession>
<evidence type="ECO:0000305" key="1"/>
<feature type="chain" id="PRO_0000288954" description="Organic hydroperoxide resistance protein-like">
    <location>
        <begin position="1"/>
        <end position="140"/>
    </location>
</feature>
<comment type="similarity">
    <text evidence="1">Belongs to the OsmC/Ohr family.</text>
</comment>
<reference key="1">
    <citation type="journal article" date="2007" name="PLoS ONE">
        <title>Molecular correlates of host specialization in Staphylococcus aureus.</title>
        <authorList>
            <person name="Herron-Olson L."/>
            <person name="Fitzgerald J.R."/>
            <person name="Musser J.M."/>
            <person name="Kapur V."/>
        </authorList>
    </citation>
    <scope>NUCLEOTIDE SEQUENCE [LARGE SCALE GENOMIC DNA]</scope>
    <source>
        <strain>bovine RF122 / ET3-1</strain>
    </source>
</reference>
<dbReference type="EMBL" id="AJ938182">
    <property type="protein sequence ID" value="CAI80447.1"/>
    <property type="molecule type" value="Genomic_DNA"/>
</dbReference>
<dbReference type="RefSeq" id="WP_000974458.1">
    <property type="nucleotide sequence ID" value="NC_007622.1"/>
</dbReference>
<dbReference type="SMR" id="Q2YWK0"/>
<dbReference type="KEGG" id="sab:SAB0759c"/>
<dbReference type="HOGENOM" id="CLU_106355_2_1_9"/>
<dbReference type="GO" id="GO:0006979">
    <property type="term" value="P:response to oxidative stress"/>
    <property type="evidence" value="ECO:0007669"/>
    <property type="project" value="InterPro"/>
</dbReference>
<dbReference type="Gene3D" id="2.20.25.10">
    <property type="match status" value="1"/>
</dbReference>
<dbReference type="Gene3D" id="3.30.300.20">
    <property type="match status" value="1"/>
</dbReference>
<dbReference type="InterPro" id="IPR015946">
    <property type="entry name" value="KH_dom-like_a/b"/>
</dbReference>
<dbReference type="InterPro" id="IPR019953">
    <property type="entry name" value="OHR"/>
</dbReference>
<dbReference type="InterPro" id="IPR003718">
    <property type="entry name" value="OsmC/Ohr_fam"/>
</dbReference>
<dbReference type="InterPro" id="IPR036102">
    <property type="entry name" value="OsmC/Ohrsf"/>
</dbReference>
<dbReference type="NCBIfam" id="TIGR03561">
    <property type="entry name" value="organ_hyd_perox"/>
    <property type="match status" value="1"/>
</dbReference>
<dbReference type="PANTHER" id="PTHR33797">
    <property type="entry name" value="ORGANIC HYDROPEROXIDE RESISTANCE PROTEIN-LIKE"/>
    <property type="match status" value="1"/>
</dbReference>
<dbReference type="PANTHER" id="PTHR33797:SF2">
    <property type="entry name" value="ORGANIC HYDROPEROXIDE RESISTANCE PROTEIN-LIKE"/>
    <property type="match status" value="1"/>
</dbReference>
<dbReference type="Pfam" id="PF02566">
    <property type="entry name" value="OsmC"/>
    <property type="match status" value="1"/>
</dbReference>
<dbReference type="SUPFAM" id="SSF82784">
    <property type="entry name" value="OsmC-like"/>
    <property type="match status" value="1"/>
</dbReference>
<proteinExistence type="inferred from homology"/>
<name>OHRL_STAAB</name>
<protein>
    <recommendedName>
        <fullName>Organic hydroperoxide resistance protein-like</fullName>
    </recommendedName>
</protein>
<organism>
    <name type="scientific">Staphylococcus aureus (strain bovine RF122 / ET3-1)</name>
    <dbReference type="NCBI Taxonomy" id="273036"/>
    <lineage>
        <taxon>Bacteria</taxon>
        <taxon>Bacillati</taxon>
        <taxon>Bacillota</taxon>
        <taxon>Bacilli</taxon>
        <taxon>Bacillales</taxon>
        <taxon>Staphylococcaceae</taxon>
        <taxon>Staphylococcus</taxon>
    </lineage>
</organism>
<gene>
    <name type="ordered locus">SAB0759c</name>
</gene>
<sequence length="140" mass="15349">MAIHYETKATNVGGRKGHVYTDDRALDIDIVPPAQADGKATNPEQLFAAGYASCFNGAFDLILKQNKVRDAHPEVTLTVRLEDDPDSESPQLSVSIDATIKNVISQEEAEKYLQMAHEFCPYSKATQGNINVDLNVNVVD</sequence>